<sequence>MTKMNVESFNLDHTKVVAPFIRLAGTMEGLNGDVIHKYDIRFKQPNKEHMDMPGLHSLEHLMAENIRNHTDKVVDLSPMGCQTGFYVSFINHDDYDDVLNIIDQTLHDVLNASEVPACNEVQCGWAASHSLEGAKTIAQAFLDKREQWNDIYGEGK</sequence>
<protein>
    <recommendedName>
        <fullName evidence="1">S-ribosylhomocysteine lyase</fullName>
        <ecNumber evidence="1">4.4.1.21</ecNumber>
    </recommendedName>
    <alternativeName>
        <fullName evidence="1">AI-2 synthesis protein</fullName>
    </alternativeName>
    <alternativeName>
        <fullName evidence="1">Autoinducer-2 production protein LuxS</fullName>
    </alternativeName>
</protein>
<feature type="chain" id="PRO_0000172260" description="S-ribosylhomocysteine lyase">
    <location>
        <begin position="1"/>
        <end position="156"/>
    </location>
</feature>
<feature type="binding site" evidence="1">
    <location>
        <position position="56"/>
    </location>
    <ligand>
        <name>Fe cation</name>
        <dbReference type="ChEBI" id="CHEBI:24875"/>
    </ligand>
</feature>
<feature type="binding site" evidence="1">
    <location>
        <position position="60"/>
    </location>
    <ligand>
        <name>Fe cation</name>
        <dbReference type="ChEBI" id="CHEBI:24875"/>
    </ligand>
</feature>
<feature type="binding site" evidence="1">
    <location>
        <position position="123"/>
    </location>
    <ligand>
        <name>Fe cation</name>
        <dbReference type="ChEBI" id="CHEBI:24875"/>
    </ligand>
</feature>
<reference key="1">
    <citation type="journal article" date="2005" name="J. Bacteriol.">
        <title>Insights on evolution of virulence and resistance from the complete genome analysis of an early methicillin-resistant Staphylococcus aureus strain and a biofilm-producing methicillin-resistant Staphylococcus epidermidis strain.</title>
        <authorList>
            <person name="Gill S.R."/>
            <person name="Fouts D.E."/>
            <person name="Archer G.L."/>
            <person name="Mongodin E.F."/>
            <person name="DeBoy R.T."/>
            <person name="Ravel J."/>
            <person name="Paulsen I.T."/>
            <person name="Kolonay J.F."/>
            <person name="Brinkac L.M."/>
            <person name="Beanan M.J."/>
            <person name="Dodson R.J."/>
            <person name="Daugherty S.C."/>
            <person name="Madupu R."/>
            <person name="Angiuoli S.V."/>
            <person name="Durkin A.S."/>
            <person name="Haft D.H."/>
            <person name="Vamathevan J.J."/>
            <person name="Khouri H."/>
            <person name="Utterback T.R."/>
            <person name="Lee C."/>
            <person name="Dimitrov G."/>
            <person name="Jiang L."/>
            <person name="Qin H."/>
            <person name="Weidman J."/>
            <person name="Tran K."/>
            <person name="Kang K.H."/>
            <person name="Hance I.R."/>
            <person name="Nelson K.E."/>
            <person name="Fraser C.M."/>
        </authorList>
    </citation>
    <scope>NUCLEOTIDE SEQUENCE [LARGE SCALE GENOMIC DNA]</scope>
    <source>
        <strain>ATCC 35984 / DSM 28319 / BCRC 17069 / CCUG 31568 / BM 3577 / RP62A</strain>
    </source>
</reference>
<dbReference type="EC" id="4.4.1.21" evidence="1"/>
<dbReference type="EMBL" id="CP000029">
    <property type="protein sequence ID" value="AAW55071.1"/>
    <property type="molecule type" value="Genomic_DNA"/>
</dbReference>
<dbReference type="RefSeq" id="WP_001829929.1">
    <property type="nucleotide sequence ID" value="NC_002976.3"/>
</dbReference>
<dbReference type="SMR" id="Q5HM88"/>
<dbReference type="STRING" id="176279.SERP1741"/>
<dbReference type="KEGG" id="ser:SERP1741"/>
<dbReference type="eggNOG" id="COG1854">
    <property type="taxonomic scope" value="Bacteria"/>
</dbReference>
<dbReference type="HOGENOM" id="CLU_107531_2_0_9"/>
<dbReference type="Proteomes" id="UP000000531">
    <property type="component" value="Chromosome"/>
</dbReference>
<dbReference type="GO" id="GO:0005506">
    <property type="term" value="F:iron ion binding"/>
    <property type="evidence" value="ECO:0007669"/>
    <property type="project" value="InterPro"/>
</dbReference>
<dbReference type="GO" id="GO:0043768">
    <property type="term" value="F:S-ribosylhomocysteine lyase activity"/>
    <property type="evidence" value="ECO:0007669"/>
    <property type="project" value="UniProtKB-UniRule"/>
</dbReference>
<dbReference type="GO" id="GO:0009372">
    <property type="term" value="P:quorum sensing"/>
    <property type="evidence" value="ECO:0007669"/>
    <property type="project" value="UniProtKB-UniRule"/>
</dbReference>
<dbReference type="Gene3D" id="3.30.1360.80">
    <property type="entry name" value="S-ribosylhomocysteinase (LuxS)"/>
    <property type="match status" value="1"/>
</dbReference>
<dbReference type="HAMAP" id="MF_00091">
    <property type="entry name" value="LuxS"/>
    <property type="match status" value="1"/>
</dbReference>
<dbReference type="InterPro" id="IPR037005">
    <property type="entry name" value="LuxS_sf"/>
</dbReference>
<dbReference type="InterPro" id="IPR011249">
    <property type="entry name" value="Metalloenz_LuxS/M16"/>
</dbReference>
<dbReference type="InterPro" id="IPR003815">
    <property type="entry name" value="S-ribosylhomocysteinase"/>
</dbReference>
<dbReference type="NCBIfam" id="NF002604">
    <property type="entry name" value="PRK02260.1-4"/>
    <property type="match status" value="1"/>
</dbReference>
<dbReference type="PANTHER" id="PTHR35799">
    <property type="entry name" value="S-RIBOSYLHOMOCYSTEINE LYASE"/>
    <property type="match status" value="1"/>
</dbReference>
<dbReference type="PANTHER" id="PTHR35799:SF1">
    <property type="entry name" value="S-RIBOSYLHOMOCYSTEINE LYASE"/>
    <property type="match status" value="1"/>
</dbReference>
<dbReference type="Pfam" id="PF02664">
    <property type="entry name" value="LuxS"/>
    <property type="match status" value="1"/>
</dbReference>
<dbReference type="PIRSF" id="PIRSF006160">
    <property type="entry name" value="AI2"/>
    <property type="match status" value="1"/>
</dbReference>
<dbReference type="PRINTS" id="PR01487">
    <property type="entry name" value="LUXSPROTEIN"/>
</dbReference>
<dbReference type="SUPFAM" id="SSF63411">
    <property type="entry name" value="LuxS/MPP-like metallohydrolase"/>
    <property type="match status" value="1"/>
</dbReference>
<comment type="function">
    <text evidence="1">Involved in the synthesis of autoinducer 2 (AI-2) which is secreted by bacteria and is used to communicate both the cell density and the metabolic potential of the environment. The regulation of gene expression in response to changes in cell density is called quorum sensing. Catalyzes the transformation of S-ribosylhomocysteine (RHC) to homocysteine (HC) and 4,5-dihydroxy-2,3-pentadione (DPD).</text>
</comment>
<comment type="catalytic activity">
    <reaction evidence="1">
        <text>S-(5-deoxy-D-ribos-5-yl)-L-homocysteine = (S)-4,5-dihydroxypentane-2,3-dione + L-homocysteine</text>
        <dbReference type="Rhea" id="RHEA:17753"/>
        <dbReference type="ChEBI" id="CHEBI:29484"/>
        <dbReference type="ChEBI" id="CHEBI:58195"/>
        <dbReference type="ChEBI" id="CHEBI:58199"/>
        <dbReference type="EC" id="4.4.1.21"/>
    </reaction>
</comment>
<comment type="cofactor">
    <cofactor evidence="1">
        <name>Fe cation</name>
        <dbReference type="ChEBI" id="CHEBI:24875"/>
    </cofactor>
    <text evidence="1">Binds 1 Fe cation per subunit.</text>
</comment>
<comment type="subunit">
    <text evidence="1">Homodimer.</text>
</comment>
<comment type="similarity">
    <text evidence="1">Belongs to the LuxS family.</text>
</comment>
<accession>Q5HM88</accession>
<evidence type="ECO:0000255" key="1">
    <source>
        <dbReference type="HAMAP-Rule" id="MF_00091"/>
    </source>
</evidence>
<name>LUXS_STAEQ</name>
<keyword id="KW-0071">Autoinducer synthesis</keyword>
<keyword id="KW-0408">Iron</keyword>
<keyword id="KW-0456">Lyase</keyword>
<keyword id="KW-0479">Metal-binding</keyword>
<keyword id="KW-0673">Quorum sensing</keyword>
<keyword id="KW-1185">Reference proteome</keyword>
<organism>
    <name type="scientific">Staphylococcus epidermidis (strain ATCC 35984 / DSM 28319 / BCRC 17069 / CCUG 31568 / BM 3577 / RP62A)</name>
    <dbReference type="NCBI Taxonomy" id="176279"/>
    <lineage>
        <taxon>Bacteria</taxon>
        <taxon>Bacillati</taxon>
        <taxon>Bacillota</taxon>
        <taxon>Bacilli</taxon>
        <taxon>Bacillales</taxon>
        <taxon>Staphylococcaceae</taxon>
        <taxon>Staphylococcus</taxon>
    </lineage>
</organism>
<gene>
    <name evidence="1" type="primary">luxS</name>
    <name type="ordered locus">SERP1741</name>
</gene>
<proteinExistence type="inferred from homology"/>